<accession>A6URT1</accession>
<protein>
    <recommendedName>
        <fullName evidence="1">Homoserine kinase</fullName>
        <shortName evidence="1">HK</shortName>
        <shortName evidence="1">HSK</shortName>
        <ecNumber evidence="1">2.7.1.39</ecNumber>
    </recommendedName>
</protein>
<name>KHSE_METVS</name>
<evidence type="ECO:0000255" key="1">
    <source>
        <dbReference type="HAMAP-Rule" id="MF_00384"/>
    </source>
</evidence>
<reference key="1">
    <citation type="submission" date="2007-06" db="EMBL/GenBank/DDBJ databases">
        <title>Complete sequence of Methanococcus vannielii SB.</title>
        <authorList>
            <consortium name="US DOE Joint Genome Institute"/>
            <person name="Copeland A."/>
            <person name="Lucas S."/>
            <person name="Lapidus A."/>
            <person name="Barry K."/>
            <person name="Glavina del Rio T."/>
            <person name="Dalin E."/>
            <person name="Tice H."/>
            <person name="Pitluck S."/>
            <person name="Chain P."/>
            <person name="Malfatti S."/>
            <person name="Shin M."/>
            <person name="Vergez L."/>
            <person name="Schmutz J."/>
            <person name="Larimer F."/>
            <person name="Land M."/>
            <person name="Hauser L."/>
            <person name="Kyrpides N."/>
            <person name="Anderson I."/>
            <person name="Sieprawska-Lupa M."/>
            <person name="Whitman W.B."/>
            <person name="Richardson P."/>
        </authorList>
    </citation>
    <scope>NUCLEOTIDE SEQUENCE [LARGE SCALE GENOMIC DNA]</scope>
    <source>
        <strain>ATCC 35089 / DSM 1224 / JCM 13029 / OCM 148 / SB</strain>
    </source>
</reference>
<feature type="chain" id="PRO_1000049145" description="Homoserine kinase">
    <location>
        <begin position="1"/>
        <end position="302"/>
    </location>
</feature>
<feature type="binding site" evidence="1">
    <location>
        <begin position="90"/>
        <end position="100"/>
    </location>
    <ligand>
        <name>ATP</name>
        <dbReference type="ChEBI" id="CHEBI:30616"/>
    </ligand>
</feature>
<sequence length="302" mass="32536">MKKVKVCAPGTSANLGPGYDIFGIALSKPYDIVTIEKVDEFGIKITLEGEKAEEIPTNVEENTAGVVAKKMIEDFKIESGIHIHIVKGIKPGSGLGSSSASCAGVAFGLNELFELKLSKLDLVKYASLGEAVAAGAPHADNVAPAIFGGFTLTTNYEPLEVLHIPVEIDVIVALPNIQVSTKSAREILPKEVPMKSMVNNVGKAAGMIYALYNNDLDLFGQYMSKDAVVEPCRAQLITGYLEIKEKLKDLVYGVTISGSGPAIIAIPKKEHVIDIKNIFKEVYNCPVYYTRVGLGCYIEEIE</sequence>
<proteinExistence type="inferred from homology"/>
<keyword id="KW-0028">Amino-acid biosynthesis</keyword>
<keyword id="KW-0067">ATP-binding</keyword>
<keyword id="KW-0963">Cytoplasm</keyword>
<keyword id="KW-0418">Kinase</keyword>
<keyword id="KW-0547">Nucleotide-binding</keyword>
<keyword id="KW-0791">Threonine biosynthesis</keyword>
<keyword id="KW-0808">Transferase</keyword>
<dbReference type="EC" id="2.7.1.39" evidence="1"/>
<dbReference type="EMBL" id="CP000742">
    <property type="protein sequence ID" value="ABR55203.1"/>
    <property type="molecule type" value="Genomic_DNA"/>
</dbReference>
<dbReference type="RefSeq" id="WP_012066118.1">
    <property type="nucleotide sequence ID" value="NC_009634.1"/>
</dbReference>
<dbReference type="SMR" id="A6URT1"/>
<dbReference type="STRING" id="406327.Mevan_1306"/>
<dbReference type="GeneID" id="5324821"/>
<dbReference type="KEGG" id="mvn:Mevan_1306"/>
<dbReference type="eggNOG" id="arCOG01027">
    <property type="taxonomic scope" value="Archaea"/>
</dbReference>
<dbReference type="HOGENOM" id="CLU_041243_1_1_2"/>
<dbReference type="OrthoDB" id="28273at2157"/>
<dbReference type="UniPathway" id="UPA00050">
    <property type="reaction ID" value="UER00064"/>
</dbReference>
<dbReference type="Proteomes" id="UP000001107">
    <property type="component" value="Chromosome"/>
</dbReference>
<dbReference type="GO" id="GO:0005737">
    <property type="term" value="C:cytoplasm"/>
    <property type="evidence" value="ECO:0007669"/>
    <property type="project" value="UniProtKB-SubCell"/>
</dbReference>
<dbReference type="GO" id="GO:0005524">
    <property type="term" value="F:ATP binding"/>
    <property type="evidence" value="ECO:0007669"/>
    <property type="project" value="UniProtKB-UniRule"/>
</dbReference>
<dbReference type="GO" id="GO:0004413">
    <property type="term" value="F:homoserine kinase activity"/>
    <property type="evidence" value="ECO:0007669"/>
    <property type="project" value="UniProtKB-UniRule"/>
</dbReference>
<dbReference type="GO" id="GO:0009088">
    <property type="term" value="P:threonine biosynthetic process"/>
    <property type="evidence" value="ECO:0007669"/>
    <property type="project" value="UniProtKB-UniRule"/>
</dbReference>
<dbReference type="Gene3D" id="3.30.230.10">
    <property type="match status" value="1"/>
</dbReference>
<dbReference type="Gene3D" id="3.30.70.890">
    <property type="entry name" value="GHMP kinase, C-terminal domain"/>
    <property type="match status" value="1"/>
</dbReference>
<dbReference type="HAMAP" id="MF_00384">
    <property type="entry name" value="Homoser_kinase"/>
    <property type="match status" value="1"/>
</dbReference>
<dbReference type="InterPro" id="IPR013750">
    <property type="entry name" value="GHMP_kinase_C_dom"/>
</dbReference>
<dbReference type="InterPro" id="IPR036554">
    <property type="entry name" value="GHMP_kinase_C_sf"/>
</dbReference>
<dbReference type="InterPro" id="IPR006204">
    <property type="entry name" value="GHMP_kinase_N_dom"/>
</dbReference>
<dbReference type="InterPro" id="IPR006203">
    <property type="entry name" value="GHMP_knse_ATP-bd_CS"/>
</dbReference>
<dbReference type="InterPro" id="IPR000870">
    <property type="entry name" value="Homoserine_kinase"/>
</dbReference>
<dbReference type="InterPro" id="IPR020568">
    <property type="entry name" value="Ribosomal_Su5_D2-typ_SF"/>
</dbReference>
<dbReference type="InterPro" id="IPR014721">
    <property type="entry name" value="Ribsml_uS5_D2-typ_fold_subgr"/>
</dbReference>
<dbReference type="NCBIfam" id="NF002288">
    <property type="entry name" value="PRK01212.1-4"/>
    <property type="match status" value="1"/>
</dbReference>
<dbReference type="NCBIfam" id="TIGR00191">
    <property type="entry name" value="thrB"/>
    <property type="match status" value="1"/>
</dbReference>
<dbReference type="PANTHER" id="PTHR20861:SF1">
    <property type="entry name" value="HOMOSERINE KINASE"/>
    <property type="match status" value="1"/>
</dbReference>
<dbReference type="PANTHER" id="PTHR20861">
    <property type="entry name" value="HOMOSERINE/4-DIPHOSPHOCYTIDYL-2-C-METHYL-D-ERYTHRITOL KINASE"/>
    <property type="match status" value="1"/>
</dbReference>
<dbReference type="Pfam" id="PF08544">
    <property type="entry name" value="GHMP_kinases_C"/>
    <property type="match status" value="1"/>
</dbReference>
<dbReference type="Pfam" id="PF00288">
    <property type="entry name" value="GHMP_kinases_N"/>
    <property type="match status" value="1"/>
</dbReference>
<dbReference type="PIRSF" id="PIRSF000676">
    <property type="entry name" value="Homoser_kin"/>
    <property type="match status" value="1"/>
</dbReference>
<dbReference type="PRINTS" id="PR00958">
    <property type="entry name" value="HOMSERKINASE"/>
</dbReference>
<dbReference type="SUPFAM" id="SSF55060">
    <property type="entry name" value="GHMP Kinase, C-terminal domain"/>
    <property type="match status" value="1"/>
</dbReference>
<dbReference type="SUPFAM" id="SSF54211">
    <property type="entry name" value="Ribosomal protein S5 domain 2-like"/>
    <property type="match status" value="1"/>
</dbReference>
<dbReference type="PROSITE" id="PS00627">
    <property type="entry name" value="GHMP_KINASES_ATP"/>
    <property type="match status" value="1"/>
</dbReference>
<comment type="function">
    <text evidence="1">Catalyzes the ATP-dependent phosphorylation of L-homoserine to L-homoserine phosphate.</text>
</comment>
<comment type="catalytic activity">
    <reaction evidence="1">
        <text>L-homoserine + ATP = O-phospho-L-homoserine + ADP + H(+)</text>
        <dbReference type="Rhea" id="RHEA:13985"/>
        <dbReference type="ChEBI" id="CHEBI:15378"/>
        <dbReference type="ChEBI" id="CHEBI:30616"/>
        <dbReference type="ChEBI" id="CHEBI:57476"/>
        <dbReference type="ChEBI" id="CHEBI:57590"/>
        <dbReference type="ChEBI" id="CHEBI:456216"/>
        <dbReference type="EC" id="2.7.1.39"/>
    </reaction>
</comment>
<comment type="pathway">
    <text evidence="1">Amino-acid biosynthesis; L-threonine biosynthesis; L-threonine from L-aspartate: step 4/5.</text>
</comment>
<comment type="subcellular location">
    <subcellularLocation>
        <location evidence="1">Cytoplasm</location>
    </subcellularLocation>
</comment>
<comment type="similarity">
    <text evidence="1">Belongs to the GHMP kinase family. Homoserine kinase subfamily.</text>
</comment>
<organism>
    <name type="scientific">Methanococcus vannielii (strain ATCC 35089 / DSM 1224 / JCM 13029 / OCM 148 / SB)</name>
    <dbReference type="NCBI Taxonomy" id="406327"/>
    <lineage>
        <taxon>Archaea</taxon>
        <taxon>Methanobacteriati</taxon>
        <taxon>Methanobacteriota</taxon>
        <taxon>Methanomada group</taxon>
        <taxon>Methanococci</taxon>
        <taxon>Methanococcales</taxon>
        <taxon>Methanococcaceae</taxon>
        <taxon>Methanococcus</taxon>
    </lineage>
</organism>
<gene>
    <name evidence="1" type="primary">thrB</name>
    <name type="ordered locus">Mevan_1306</name>
</gene>